<accession>Q01360</accession>
<keyword id="KW-0903">Direct protein sequencing</keyword>
<keyword id="KW-0378">Hydrolase</keyword>
<name>AMIE_RHOER</name>
<proteinExistence type="evidence at protein level"/>
<protein>
    <recommendedName>
        <fullName>Aliphatic amidase</fullName>
        <ecNumber>3.5.1.4</ecNumber>
    </recommendedName>
    <alternativeName>
        <fullName>Acylamide amidohydrolase</fullName>
    </alternativeName>
    <alternativeName>
        <fullName>Wide spectrum amidase</fullName>
    </alternativeName>
</protein>
<reference key="1">
    <citation type="journal article" date="1992" name="Gene">
        <title>Cloning and primary structure of the wide-spectrum amidase from Brevibacterium sp. R312: high homology to the amiE product from Pseudomonas aeruginosa.</title>
        <authorList>
            <person name="Soubrier F."/>
            <person name="Levy-Schil S."/>
            <person name="Mayaux J.F."/>
            <person name="Petre D."/>
            <person name="Arnaud A."/>
            <person name="Crouzet J."/>
        </authorList>
    </citation>
    <scope>NUCLEOTIDE SEQUENCE [GENOMIC DNA]</scope>
    <scope>PROTEIN SEQUENCE OF 1-25</scope>
    <source>
        <strain>Brevibacterium sp. R312</strain>
    </source>
</reference>
<reference key="2">
    <citation type="submission" date="1992-03" db="EMBL/GenBank/DDBJ databases">
        <title>Cloning and expression of an aliphatic amidase from Rhodococcus erythropolis in E. coli and R. erythropolis using a new R. erythropolis transformation system.</title>
        <authorList>
            <person name="Hjort C.M."/>
            <person name="Woeldike H.F."/>
            <person name="Emborg C."/>
        </authorList>
    </citation>
    <scope>NUCLEOTIDE SEQUENCE [GENOMIC DNA]</scope>
</reference>
<reference key="3">
    <citation type="journal article" date="1998" name="J. Mol. Catal., B Enzym.">
        <title>Study of the acyl transfer activity of a recombinant amidase overproduced in an Escherichia coli strain. Application for short-chain hydroxamic acid and acid hydrazide synthesis.</title>
        <authorList>
            <person name="Fournand D."/>
            <person name="Arnaud A."/>
            <person name="Galzy P."/>
        </authorList>
    </citation>
    <scope>FUNCTION</scope>
    <source>
        <strain>Brevibacterium sp. R312</strain>
    </source>
</reference>
<comment type="function">
    <text evidence="3">Catalyzes the hydrolysis of short-chain aliphatic amides to their corresponding organic acids with release of ammonia. Hydrolyzes propionamide, acetamide and acrylamide. Enables the organism to use such amides as both carbon and nitrogen source.</text>
</comment>
<comment type="function">
    <text evidence="3">Also exhibits in vitro acyl transferase activity, transferring the acyl moiety of short-chain amides to hydroxylamine or hydrazine to form hydroxamates and acid hydrazides respectively. The highest level of acyl transfer activity is observed with acetamide.</text>
</comment>
<comment type="catalytic activity">
    <reaction>
        <text>a monocarboxylic acid amide + H2O = a monocarboxylate + NH4(+)</text>
        <dbReference type="Rhea" id="RHEA:12020"/>
        <dbReference type="ChEBI" id="CHEBI:15377"/>
        <dbReference type="ChEBI" id="CHEBI:28938"/>
        <dbReference type="ChEBI" id="CHEBI:35757"/>
        <dbReference type="ChEBI" id="CHEBI:83628"/>
        <dbReference type="EC" id="3.5.1.4"/>
    </reaction>
</comment>
<comment type="subunit">
    <text>Homotetramer.</text>
</comment>
<comment type="similarity">
    <text evidence="4">Belongs to the carbon-nitrogen hydrolase superfamily. Aliphatic amidase family.</text>
</comment>
<gene>
    <name type="primary">amiE</name>
    <name type="synonym">amiP</name>
</gene>
<sequence>MRHGDISSSNDTVGVAVVNYKMPRLHDRAGVLENARKIADMMIGMKTGLPGMDLVVFPEYSTQGIMYNEEEMYATAATIPGDETAIFSAACREADTWGIFSITGEQHEDHPNKPPYNTLILIDNKGEIVQRYRKILPWCPIEGWYPGDTTYVTEGPKGLKISLIICDDGNYPEIWRDCAMKGAELIVRCQGYMYPAKDQQVMMSKAMAWANNCYVAVANAAGFDGVYSYFGHSAIIGFDGRTLGETGEEEYGIQYAQLSVSAIRDARENDQSQNHIFKLLHRGYSGVHAAGDGDKGVADCPFEFYKLWVTDAQKAQERVEAITRDTVGVADCRVGNLPVEKTVEA</sequence>
<evidence type="ECO:0000250" key="1"/>
<evidence type="ECO:0000255" key="2">
    <source>
        <dbReference type="PROSITE-ProRule" id="PRU00054"/>
    </source>
</evidence>
<evidence type="ECO:0000269" key="3">
    <source ref="3"/>
</evidence>
<evidence type="ECO:0000305" key="4"/>
<feature type="chain" id="PRO_0000204061" description="Aliphatic amidase">
    <location>
        <begin position="1"/>
        <end position="345"/>
    </location>
</feature>
<feature type="domain" description="CN hydrolase" evidence="2">
    <location>
        <begin position="13"/>
        <end position="260"/>
    </location>
</feature>
<feature type="active site" description="Proton acceptor" evidence="1">
    <location>
        <position position="59"/>
    </location>
</feature>
<feature type="active site" description="Proton donor" evidence="1">
    <location>
        <position position="134"/>
    </location>
</feature>
<feature type="active site" description="Nucleophile" evidence="1">
    <location>
        <position position="166"/>
    </location>
</feature>
<organism>
    <name type="scientific">Rhodococcus erythropolis</name>
    <name type="common">Arthrobacter picolinophilus</name>
    <dbReference type="NCBI Taxonomy" id="1833"/>
    <lineage>
        <taxon>Bacteria</taxon>
        <taxon>Bacillati</taxon>
        <taxon>Actinomycetota</taxon>
        <taxon>Actinomycetes</taxon>
        <taxon>Mycobacteriales</taxon>
        <taxon>Nocardiaceae</taxon>
        <taxon>Rhodococcus</taxon>
        <taxon>Rhodococcus erythropolis group</taxon>
    </lineage>
</organism>
<dbReference type="EC" id="3.5.1.4"/>
<dbReference type="EMBL" id="M76451">
    <property type="protein sequence ID" value="AAA22990.1"/>
    <property type="molecule type" value="Genomic_DNA"/>
</dbReference>
<dbReference type="EMBL" id="M88614">
    <property type="protein sequence ID" value="AAA26186.1"/>
    <property type="molecule type" value="Genomic_DNA"/>
</dbReference>
<dbReference type="RefSeq" id="WP_095973499.1">
    <property type="nucleotide sequence ID" value="NZ_CP032403.1"/>
</dbReference>
<dbReference type="SMR" id="Q01360"/>
<dbReference type="STRING" id="1833.XU06_02570"/>
<dbReference type="GeneID" id="93804599"/>
<dbReference type="OrthoDB" id="9811121at2"/>
<dbReference type="GO" id="GO:0004040">
    <property type="term" value="F:amidase activity"/>
    <property type="evidence" value="ECO:0007669"/>
    <property type="project" value="UniProtKB-UniRule"/>
</dbReference>
<dbReference type="CDD" id="cd07565">
    <property type="entry name" value="aliphatic_amidase"/>
    <property type="match status" value="1"/>
</dbReference>
<dbReference type="Gene3D" id="3.60.110.10">
    <property type="entry name" value="Carbon-nitrogen hydrolase"/>
    <property type="match status" value="1"/>
</dbReference>
<dbReference type="HAMAP" id="MF_01242">
    <property type="entry name" value="Aliphatic_amidase"/>
    <property type="match status" value="1"/>
</dbReference>
<dbReference type="InterPro" id="IPR050345">
    <property type="entry name" value="Aliph_Amidase/BUP"/>
</dbReference>
<dbReference type="InterPro" id="IPR023719">
    <property type="entry name" value="Aliphatic_amidase"/>
</dbReference>
<dbReference type="InterPro" id="IPR003010">
    <property type="entry name" value="C-N_Hydrolase"/>
</dbReference>
<dbReference type="InterPro" id="IPR036526">
    <property type="entry name" value="C-N_Hydrolase_sf"/>
</dbReference>
<dbReference type="NCBIfam" id="NF009802">
    <property type="entry name" value="PRK13286.1"/>
    <property type="match status" value="1"/>
</dbReference>
<dbReference type="PANTHER" id="PTHR43674:SF14">
    <property type="entry name" value="ALIPHATIC AMIDASE"/>
    <property type="match status" value="1"/>
</dbReference>
<dbReference type="PANTHER" id="PTHR43674">
    <property type="entry name" value="NITRILASE C965.09-RELATED"/>
    <property type="match status" value="1"/>
</dbReference>
<dbReference type="Pfam" id="PF00795">
    <property type="entry name" value="CN_hydrolase"/>
    <property type="match status" value="1"/>
</dbReference>
<dbReference type="SUPFAM" id="SSF56317">
    <property type="entry name" value="Carbon-nitrogen hydrolase"/>
    <property type="match status" value="1"/>
</dbReference>
<dbReference type="PROSITE" id="PS50263">
    <property type="entry name" value="CN_HYDROLASE"/>
    <property type="match status" value="1"/>
</dbReference>